<accession>A1L108</accession>
<accession>Q4KM42</accession>
<protein>
    <recommendedName>
        <fullName>Actin-related protein 2/3 complex subunit 5-like protein</fullName>
    </recommendedName>
    <alternativeName>
        <fullName>Arp2/3 complex 16 kDa subunit 2</fullName>
        <shortName>ARC16-2</shortName>
    </alternativeName>
</protein>
<organism>
    <name type="scientific">Rattus norvegicus</name>
    <name type="common">Rat</name>
    <dbReference type="NCBI Taxonomy" id="10116"/>
    <lineage>
        <taxon>Eukaryota</taxon>
        <taxon>Metazoa</taxon>
        <taxon>Chordata</taxon>
        <taxon>Craniata</taxon>
        <taxon>Vertebrata</taxon>
        <taxon>Euteleostomi</taxon>
        <taxon>Mammalia</taxon>
        <taxon>Eutheria</taxon>
        <taxon>Euarchontoglires</taxon>
        <taxon>Glires</taxon>
        <taxon>Rodentia</taxon>
        <taxon>Myomorpha</taxon>
        <taxon>Muroidea</taxon>
        <taxon>Muridae</taxon>
        <taxon>Murinae</taxon>
        <taxon>Rattus</taxon>
    </lineage>
</organism>
<reference key="1">
    <citation type="journal article" date="1996" name="Genome Res.">
        <title>Normalization and subtraction: two approaches to facilitate gene discovery.</title>
        <authorList>
            <person name="Bonaldo M.F."/>
            <person name="Lennon G."/>
            <person name="Soares M.B."/>
        </authorList>
    </citation>
    <scope>NUCLEOTIDE SEQUENCE [LARGE SCALE MRNA] (ISOFORM 1)</scope>
    <source>
        <strain>Sprague-Dawley</strain>
        <tissue>Eye</tissue>
    </source>
</reference>
<reference key="2">
    <citation type="journal article" date="2004" name="Genome Res.">
        <title>The status, quality, and expansion of the NIH full-length cDNA project: the Mammalian Gene Collection (MGC).</title>
        <authorList>
            <consortium name="The MGC Project Team"/>
        </authorList>
    </citation>
    <scope>NUCLEOTIDE SEQUENCE [LARGE SCALE MRNA] (ISOFORM 2)</scope>
    <scope>NUCLEOTIDE SEQUENCE [LARGE SCALE MRNA] OF 5-153 (ISOFORM 1)</scope>
    <source>
        <tissue>Spleen</tissue>
    </source>
</reference>
<reference key="3">
    <citation type="submission" date="2007-04" db="UniProtKB">
        <authorList>
            <person name="Lubec G."/>
            <person name="Diao W."/>
        </authorList>
    </citation>
    <scope>PROTEIN SEQUENCE OF 90-102 AND 134-145</scope>
    <scope>IDENTIFICATION BY MASS SPECTROMETRY</scope>
    <source>
        <strain>Sprague-Dawley</strain>
        <tissue>Hippocampus</tissue>
    </source>
</reference>
<reference key="4">
    <citation type="journal article" date="2012" name="Nat. Commun.">
        <title>Quantitative maps of protein phosphorylation sites across 14 different rat organs and tissues.</title>
        <authorList>
            <person name="Lundby A."/>
            <person name="Secher A."/>
            <person name="Lage K."/>
            <person name="Nordsborg N.B."/>
            <person name="Dmytriyev A."/>
            <person name="Lundby C."/>
            <person name="Olsen J.V."/>
        </authorList>
    </citation>
    <scope>PHOSPHORYLATION [LARGE SCALE ANALYSIS] AT SER-64</scope>
    <scope>IDENTIFICATION BY MASS SPECTROMETRY [LARGE SCALE ANALYSIS]</scope>
</reference>
<sequence length="153" mass="17010">MARNTLSSRFRRVDIDEFDENKFVDEHEEAAAASGEPGPDPCEVDGLLRQGDMLRAFHAALRNSPINTKNQAVKERAQGIVLKVLTNFKSSEIEQAVQSLDRNGIDLLMKYIYKGFEKPTENSSAVLLQWHEKALAVGGLGSIIRVLTARKTV</sequence>
<comment type="function">
    <text evidence="1">May function as component of the Arp2/3 complex which is involved in regulation of actin polymerization and together with an activating nucleation-promoting factor (NPF) mediates the formation of branched actin networks.</text>
</comment>
<comment type="subunit">
    <text>May be a component of the Arp2/3 complex in which it may replace ARPC5.</text>
</comment>
<comment type="subcellular location">
    <subcellularLocation>
        <location evidence="1">Cytoplasm</location>
        <location evidence="1">Cytoskeleton</location>
    </subcellularLocation>
</comment>
<comment type="alternative products">
    <event type="alternative splicing"/>
    <isoform>
        <id>A1L108-1</id>
        <name>1</name>
        <sequence type="displayed"/>
    </isoform>
    <isoform>
        <id>A1L108-2</id>
        <name>2</name>
        <sequence type="described" ref="VSP_023450"/>
    </isoform>
</comment>
<comment type="similarity">
    <text evidence="3">Belongs to the ARPC5 family.</text>
</comment>
<evidence type="ECO:0000250" key="1"/>
<evidence type="ECO:0000303" key="2">
    <source>
    </source>
</evidence>
<evidence type="ECO:0000305" key="3"/>
<evidence type="ECO:0007744" key="4">
    <source>
    </source>
</evidence>
<proteinExistence type="evidence at protein level"/>
<keyword id="KW-0009">Actin-binding</keyword>
<keyword id="KW-0025">Alternative splicing</keyword>
<keyword id="KW-0963">Cytoplasm</keyword>
<keyword id="KW-0206">Cytoskeleton</keyword>
<keyword id="KW-0903">Direct protein sequencing</keyword>
<keyword id="KW-0597">Phosphoprotein</keyword>
<keyword id="KW-1185">Reference proteome</keyword>
<gene>
    <name type="primary">Arpc5l</name>
</gene>
<dbReference type="EMBL" id="BI296526">
    <property type="status" value="NOT_ANNOTATED_CDS"/>
    <property type="molecule type" value="mRNA"/>
</dbReference>
<dbReference type="EMBL" id="BC098820">
    <property type="protein sequence ID" value="AAH98820.1"/>
    <property type="molecule type" value="mRNA"/>
</dbReference>
<dbReference type="EMBL" id="BC127445">
    <property type="protein sequence ID" value="AAI27446.1"/>
    <property type="molecule type" value="mRNA"/>
</dbReference>
<dbReference type="RefSeq" id="NP_001032856.2">
    <molecule id="A1L108-1"/>
    <property type="nucleotide sequence ID" value="NM_001037767.2"/>
</dbReference>
<dbReference type="RefSeq" id="XP_038960717.1">
    <molecule id="A1L108-2"/>
    <property type="nucleotide sequence ID" value="XM_039104789.2"/>
</dbReference>
<dbReference type="RefSeq" id="XP_038960719.1">
    <molecule id="A1L108-2"/>
    <property type="nucleotide sequence ID" value="XM_039104791.2"/>
</dbReference>
<dbReference type="RefSeq" id="XP_038960721.1">
    <molecule id="A1L108-2"/>
    <property type="nucleotide sequence ID" value="XM_039104793.2"/>
</dbReference>
<dbReference type="RefSeq" id="XP_038960722.1">
    <molecule id="A1L108-2"/>
    <property type="nucleotide sequence ID" value="XM_039104794.2"/>
</dbReference>
<dbReference type="RefSeq" id="XP_063139599.1">
    <molecule id="A1L108-2"/>
    <property type="nucleotide sequence ID" value="XM_063283529.1"/>
</dbReference>
<dbReference type="RefSeq" id="XP_063139600.1">
    <molecule id="A1L108-2"/>
    <property type="nucleotide sequence ID" value="XM_063283530.1"/>
</dbReference>
<dbReference type="RefSeq" id="XP_063139601.1">
    <molecule id="A1L108-2"/>
    <property type="nucleotide sequence ID" value="XM_063283531.1"/>
</dbReference>
<dbReference type="SMR" id="A1L108"/>
<dbReference type="FunCoup" id="A1L108">
    <property type="interactions" value="2823"/>
</dbReference>
<dbReference type="IntAct" id="A1L108">
    <property type="interactions" value="1"/>
</dbReference>
<dbReference type="MINT" id="A1L108"/>
<dbReference type="STRING" id="10116.ENSRNOP00000019405"/>
<dbReference type="iPTMnet" id="A1L108"/>
<dbReference type="PhosphoSitePlus" id="A1L108"/>
<dbReference type="jPOST" id="A1L108"/>
<dbReference type="PaxDb" id="10116-ENSRNOP00000019405"/>
<dbReference type="PeptideAtlas" id="A1L108"/>
<dbReference type="Ensembl" id="ENSRNOT00000096562.1">
    <molecule id="A1L108-2"/>
    <property type="protein sequence ID" value="ENSRNOP00000089031.1"/>
    <property type="gene ID" value="ENSRNOG00000014317.8"/>
</dbReference>
<dbReference type="Ensembl" id="ENSRNOT00000112049.1">
    <molecule id="A1L108-1"/>
    <property type="protein sequence ID" value="ENSRNOP00000083929.1"/>
    <property type="gene ID" value="ENSRNOG00000067388.1"/>
</dbReference>
<dbReference type="GeneID" id="296710"/>
<dbReference type="KEGG" id="rno:296710"/>
<dbReference type="UCSC" id="RGD:1308867">
    <molecule id="A1L108-1"/>
    <property type="organism name" value="rat"/>
</dbReference>
<dbReference type="AGR" id="RGD:1308867"/>
<dbReference type="AGR" id="RGD:1560362"/>
<dbReference type="CTD" id="81873"/>
<dbReference type="RGD" id="1308867">
    <property type="gene designation" value="Arpc5l"/>
</dbReference>
<dbReference type="VEuPathDB" id="HostDB:ENSRNOG00000014317"/>
<dbReference type="eggNOG" id="KOG3380">
    <property type="taxonomic scope" value="Eukaryota"/>
</dbReference>
<dbReference type="GeneTree" id="ENSGT00940000158501"/>
<dbReference type="HOGENOM" id="CLU_101888_1_1_1"/>
<dbReference type="InParanoid" id="A1L108"/>
<dbReference type="OMA" id="YERESMF"/>
<dbReference type="OrthoDB" id="429520at2759"/>
<dbReference type="PhylomeDB" id="A1L108"/>
<dbReference type="PRO" id="PR:A1L108"/>
<dbReference type="Proteomes" id="UP000002494">
    <property type="component" value="Chromosome 3"/>
</dbReference>
<dbReference type="Proteomes" id="UP000002494">
    <property type="component" value="Chromosome 9"/>
</dbReference>
<dbReference type="Bgee" id="ENSRNOG00000014317">
    <property type="expression patterns" value="Expressed in spleen and 20 other cell types or tissues"/>
</dbReference>
<dbReference type="GO" id="GO:0005885">
    <property type="term" value="C:Arp2/3 protein complex"/>
    <property type="evidence" value="ECO:0000318"/>
    <property type="project" value="GO_Central"/>
</dbReference>
<dbReference type="GO" id="GO:0005737">
    <property type="term" value="C:cytoplasm"/>
    <property type="evidence" value="ECO:0000318"/>
    <property type="project" value="GO_Central"/>
</dbReference>
<dbReference type="GO" id="GO:0098978">
    <property type="term" value="C:glutamatergic synapse"/>
    <property type="evidence" value="ECO:0000266"/>
    <property type="project" value="RGD"/>
</dbReference>
<dbReference type="GO" id="GO:0045202">
    <property type="term" value="C:synapse"/>
    <property type="evidence" value="ECO:0000266"/>
    <property type="project" value="RGD"/>
</dbReference>
<dbReference type="GO" id="GO:0051015">
    <property type="term" value="F:actin filament binding"/>
    <property type="evidence" value="ECO:0000318"/>
    <property type="project" value="GO_Central"/>
</dbReference>
<dbReference type="GO" id="GO:0034314">
    <property type="term" value="P:Arp2/3 complex-mediated actin nucleation"/>
    <property type="evidence" value="ECO:0000318"/>
    <property type="project" value="GO_Central"/>
</dbReference>
<dbReference type="GO" id="GO:0016477">
    <property type="term" value="P:cell migration"/>
    <property type="evidence" value="ECO:0000318"/>
    <property type="project" value="GO_Central"/>
</dbReference>
<dbReference type="GO" id="GO:0030833">
    <property type="term" value="P:regulation of actin filament polymerization"/>
    <property type="evidence" value="ECO:0007669"/>
    <property type="project" value="InterPro"/>
</dbReference>
<dbReference type="FunFam" id="1.25.40.190:FF:000001">
    <property type="entry name" value="Actin-related protein 2/3 complex subunit 5"/>
    <property type="match status" value="1"/>
</dbReference>
<dbReference type="Gene3D" id="1.25.40.190">
    <property type="entry name" value="Actin-related protein 2/3 complex subunit 5"/>
    <property type="match status" value="1"/>
</dbReference>
<dbReference type="InterPro" id="IPR006789">
    <property type="entry name" value="ARPC5"/>
</dbReference>
<dbReference type="InterPro" id="IPR036743">
    <property type="entry name" value="ARPC5_sf"/>
</dbReference>
<dbReference type="PANTHER" id="PTHR12644">
    <property type="entry name" value="ARP2/3 COMPLEX 16 KD SUBUNIT P16-ARC"/>
    <property type="match status" value="1"/>
</dbReference>
<dbReference type="Pfam" id="PF04699">
    <property type="entry name" value="P16-Arc"/>
    <property type="match status" value="1"/>
</dbReference>
<dbReference type="PIRSF" id="PIRSF039096">
    <property type="entry name" value="p16-ARC"/>
    <property type="match status" value="1"/>
</dbReference>
<dbReference type="SUPFAM" id="SSF69103">
    <property type="entry name" value="Arp2/3 complex 16 kDa subunit ARPC5"/>
    <property type="match status" value="1"/>
</dbReference>
<feature type="chain" id="PRO_0000279483" description="Actin-related protein 2/3 complex subunit 5-like protein">
    <location>
        <begin position="1"/>
        <end position="153"/>
    </location>
</feature>
<feature type="modified residue" description="Phosphoserine" evidence="4">
    <location>
        <position position="64"/>
    </location>
</feature>
<feature type="splice variant" id="VSP_023450" description="In isoform 2." evidence="2">
    <location>
        <begin position="1"/>
        <end position="52"/>
    </location>
</feature>
<name>ARP5L_RAT</name>